<keyword id="KW-0150">Chloroplast</keyword>
<keyword id="KW-0201">Cytochrome c-type biogenesis</keyword>
<keyword id="KW-0472">Membrane</keyword>
<keyword id="KW-0934">Plastid</keyword>
<keyword id="KW-0793">Thylakoid</keyword>
<keyword id="KW-0812">Transmembrane</keyword>
<keyword id="KW-1133">Transmembrane helix</keyword>
<sequence>MIFSTLEHILTHISFSVVSIVITIHLITLLADEFVELYDSSEKGMITTFFCITGLLVTRWIFLGHLPLSDLYESLIFLSWSFSIIHMVPYFKKHKNFLSAITAPSTFFTQGFATSGLLTDMHQSEILVPALQSQWLMMHVSMMILGYAALLCGSLFSVAFLVITFRKIIRIFDKSNNLLNNSFFFSEIQYMAERKNVLRNISFLSSRNYYRFQLIQQLDDWGYRIISIGFIFLTIGILSGAVWANEAWGSYWNWDPKETWAFITWTIFAIYFHIRTNKKLEGFHSAIVASIGFLLIWICYFGVNLLGIGLHSYGSFTLTISI</sequence>
<reference key="1">
    <citation type="journal article" date="2008" name="Theor. Appl. Genet.">
        <title>The complete nucleotide sequence of the cassava (Manihot esculenta) chloroplast genome and the evolution of atpF in Malpighiales: RNA editing and multiple losses of a group II intron.</title>
        <authorList>
            <person name="Daniell H."/>
            <person name="Wurdack K.J."/>
            <person name="Kanagaraj A."/>
            <person name="Lee S.-B."/>
            <person name="Saski C."/>
            <person name="Jansen R.K."/>
        </authorList>
    </citation>
    <scope>NUCLEOTIDE SEQUENCE [LARGE SCALE GENOMIC DNA]</scope>
    <source>
        <strain>cv. TME3</strain>
    </source>
</reference>
<organism>
    <name type="scientific">Manihot esculenta</name>
    <name type="common">Cassava</name>
    <name type="synonym">Jatropha manihot</name>
    <dbReference type="NCBI Taxonomy" id="3983"/>
    <lineage>
        <taxon>Eukaryota</taxon>
        <taxon>Viridiplantae</taxon>
        <taxon>Streptophyta</taxon>
        <taxon>Embryophyta</taxon>
        <taxon>Tracheophyta</taxon>
        <taxon>Spermatophyta</taxon>
        <taxon>Magnoliopsida</taxon>
        <taxon>eudicotyledons</taxon>
        <taxon>Gunneridae</taxon>
        <taxon>Pentapetalae</taxon>
        <taxon>rosids</taxon>
        <taxon>fabids</taxon>
        <taxon>Malpighiales</taxon>
        <taxon>Euphorbiaceae</taxon>
        <taxon>Crotonoideae</taxon>
        <taxon>Manihoteae</taxon>
        <taxon>Manihot</taxon>
    </lineage>
</organism>
<name>CCSA_MANES</name>
<evidence type="ECO:0000255" key="1">
    <source>
        <dbReference type="HAMAP-Rule" id="MF_01391"/>
    </source>
</evidence>
<protein>
    <recommendedName>
        <fullName evidence="1">Cytochrome c biogenesis protein CcsA</fullName>
    </recommendedName>
</protein>
<accession>B1NWJ8</accession>
<dbReference type="EMBL" id="EU117376">
    <property type="protein sequence ID" value="ABV66202.1"/>
    <property type="molecule type" value="Genomic_DNA"/>
</dbReference>
<dbReference type="RefSeq" id="YP_001718485.1">
    <property type="nucleotide sequence ID" value="NC_010433.1"/>
</dbReference>
<dbReference type="SMR" id="B1NWJ8"/>
<dbReference type="GeneID" id="6000045"/>
<dbReference type="KEGG" id="mesc:6000045"/>
<dbReference type="OrthoDB" id="1640at2759"/>
<dbReference type="GO" id="GO:0009535">
    <property type="term" value="C:chloroplast thylakoid membrane"/>
    <property type="evidence" value="ECO:0007669"/>
    <property type="project" value="UniProtKB-SubCell"/>
</dbReference>
<dbReference type="GO" id="GO:0020037">
    <property type="term" value="F:heme binding"/>
    <property type="evidence" value="ECO:0007669"/>
    <property type="project" value="InterPro"/>
</dbReference>
<dbReference type="GO" id="GO:0017004">
    <property type="term" value="P:cytochrome complex assembly"/>
    <property type="evidence" value="ECO:0007669"/>
    <property type="project" value="UniProtKB-UniRule"/>
</dbReference>
<dbReference type="HAMAP" id="MF_01391">
    <property type="entry name" value="CytC_CcsA"/>
    <property type="match status" value="1"/>
</dbReference>
<dbReference type="InterPro" id="IPR002541">
    <property type="entry name" value="Cyt_c_assembly"/>
</dbReference>
<dbReference type="InterPro" id="IPR017562">
    <property type="entry name" value="Cyt_c_biogenesis_CcsA"/>
</dbReference>
<dbReference type="InterPro" id="IPR045062">
    <property type="entry name" value="Cyt_c_biogenesis_CcsA/CcmC"/>
</dbReference>
<dbReference type="NCBIfam" id="TIGR03144">
    <property type="entry name" value="cytochr_II_ccsB"/>
    <property type="match status" value="1"/>
</dbReference>
<dbReference type="PANTHER" id="PTHR30071:SF1">
    <property type="entry name" value="CYTOCHROME B_B6 PROTEIN-RELATED"/>
    <property type="match status" value="1"/>
</dbReference>
<dbReference type="PANTHER" id="PTHR30071">
    <property type="entry name" value="HEME EXPORTER PROTEIN C"/>
    <property type="match status" value="1"/>
</dbReference>
<dbReference type="Pfam" id="PF01578">
    <property type="entry name" value="Cytochrom_C_asm"/>
    <property type="match status" value="1"/>
</dbReference>
<comment type="function">
    <text evidence="1">Required during biogenesis of c-type cytochromes (cytochrome c6 and cytochrome f) at the step of heme attachment.</text>
</comment>
<comment type="subunit">
    <text evidence="1">May interact with Ccs1.</text>
</comment>
<comment type="subcellular location">
    <subcellularLocation>
        <location evidence="1">Plastid</location>
        <location evidence="1">Chloroplast thylakoid membrane</location>
        <topology evidence="1">Multi-pass membrane protein</topology>
    </subcellularLocation>
</comment>
<comment type="similarity">
    <text evidence="1">Belongs to the CcmF/CycK/Ccl1/NrfE/CcsA family.</text>
</comment>
<geneLocation type="chloroplast"/>
<feature type="chain" id="PRO_0000353768" description="Cytochrome c biogenesis protein CcsA">
    <location>
        <begin position="1"/>
        <end position="322"/>
    </location>
</feature>
<feature type="transmembrane region" description="Helical" evidence="1">
    <location>
        <begin position="9"/>
        <end position="29"/>
    </location>
</feature>
<feature type="transmembrane region" description="Helical" evidence="1">
    <location>
        <begin position="44"/>
        <end position="64"/>
    </location>
</feature>
<feature type="transmembrane region" description="Helical" evidence="1">
    <location>
        <begin position="71"/>
        <end position="91"/>
    </location>
</feature>
<feature type="transmembrane region" description="Helical" evidence="1">
    <location>
        <begin position="97"/>
        <end position="117"/>
    </location>
</feature>
<feature type="transmembrane region" description="Helical" evidence="1">
    <location>
        <begin position="143"/>
        <end position="163"/>
    </location>
</feature>
<feature type="transmembrane region" description="Helical" evidence="1">
    <location>
        <begin position="225"/>
        <end position="245"/>
    </location>
</feature>
<feature type="transmembrane region" description="Helical" evidence="1">
    <location>
        <begin position="254"/>
        <end position="274"/>
    </location>
</feature>
<feature type="transmembrane region" description="Helical" evidence="1">
    <location>
        <begin position="286"/>
        <end position="306"/>
    </location>
</feature>
<proteinExistence type="inferred from homology"/>
<gene>
    <name evidence="1" type="primary">ccsA</name>
</gene>